<feature type="chain" id="PRO_1000049891" description="Tetraacyldisaccharide 4'-kinase">
    <location>
        <begin position="1"/>
        <end position="308"/>
    </location>
</feature>
<feature type="binding site" evidence="1">
    <location>
        <begin position="63"/>
        <end position="70"/>
    </location>
    <ligand>
        <name>ATP</name>
        <dbReference type="ChEBI" id="CHEBI:30616"/>
    </ligand>
</feature>
<evidence type="ECO:0000255" key="1">
    <source>
        <dbReference type="HAMAP-Rule" id="MF_00409"/>
    </source>
</evidence>
<accession>A7H438</accession>
<keyword id="KW-0067">ATP-binding</keyword>
<keyword id="KW-0418">Kinase</keyword>
<keyword id="KW-0441">Lipid A biosynthesis</keyword>
<keyword id="KW-0444">Lipid biosynthesis</keyword>
<keyword id="KW-0443">Lipid metabolism</keyword>
<keyword id="KW-0547">Nucleotide-binding</keyword>
<keyword id="KW-0808">Transferase</keyword>
<sequence length="308" mass="36241">MSEEKKYELWLDNYFFKPNFWQKCLAFVLLPLSVLYAFFAILNTFFRKKIVFKKPVISVGNLSFGGNGKTPLCKAIAREFDGVFIVLRGYKRKSKGLFVVKNQNEILCTLAQSGDEAMEYAFEENVKGVIVSEDRVKGIKKAFELGAKIVVLDDAFSKFHIKKFDILLESKIKPYFNFILPSGSYRLPKFYERRADFIALEGRDFLRYSFVKKNLKAVLVTAIAKPFRLYEHFIKARACYFFKDHYEFKKEELENLLKKHNCDTLMLTFKDFVKVKDFGFKCQIIELNIELKDSLREKIKTYIKEFEQ</sequence>
<gene>
    <name evidence="1" type="primary">lpxK</name>
    <name type="ordered locus">JJD26997_1199</name>
</gene>
<reference key="1">
    <citation type="submission" date="2007-07" db="EMBL/GenBank/DDBJ databases">
        <title>Complete genome sequence of Campylobacter jejuni subsp doylei 269.97 isolated from human blood.</title>
        <authorList>
            <person name="Fouts D.E."/>
            <person name="Mongodin E.F."/>
            <person name="Puiu D."/>
            <person name="Sebastian Y."/>
            <person name="Miller W.G."/>
            <person name="Mandrell R.E."/>
            <person name="Lastovica A.J."/>
            <person name="Nelson K.E."/>
        </authorList>
    </citation>
    <scope>NUCLEOTIDE SEQUENCE [LARGE SCALE GENOMIC DNA]</scope>
    <source>
        <strain>ATCC BAA-1458 / RM4099 / 269.97</strain>
    </source>
</reference>
<organism>
    <name type="scientific">Campylobacter jejuni subsp. doylei (strain ATCC BAA-1458 / RM4099 / 269.97)</name>
    <dbReference type="NCBI Taxonomy" id="360109"/>
    <lineage>
        <taxon>Bacteria</taxon>
        <taxon>Pseudomonadati</taxon>
        <taxon>Campylobacterota</taxon>
        <taxon>Epsilonproteobacteria</taxon>
        <taxon>Campylobacterales</taxon>
        <taxon>Campylobacteraceae</taxon>
        <taxon>Campylobacter</taxon>
    </lineage>
</organism>
<dbReference type="EC" id="2.7.1.130" evidence="1"/>
<dbReference type="EMBL" id="CP000768">
    <property type="protein sequence ID" value="ABS44040.1"/>
    <property type="molecule type" value="Genomic_DNA"/>
</dbReference>
<dbReference type="SMR" id="A7H438"/>
<dbReference type="KEGG" id="cjd:JJD26997_1199"/>
<dbReference type="HOGENOM" id="CLU_038816_1_0_7"/>
<dbReference type="UniPathway" id="UPA00359">
    <property type="reaction ID" value="UER00482"/>
</dbReference>
<dbReference type="Proteomes" id="UP000002302">
    <property type="component" value="Chromosome"/>
</dbReference>
<dbReference type="GO" id="GO:0005886">
    <property type="term" value="C:plasma membrane"/>
    <property type="evidence" value="ECO:0007669"/>
    <property type="project" value="TreeGrafter"/>
</dbReference>
<dbReference type="GO" id="GO:0005524">
    <property type="term" value="F:ATP binding"/>
    <property type="evidence" value="ECO:0007669"/>
    <property type="project" value="UniProtKB-UniRule"/>
</dbReference>
<dbReference type="GO" id="GO:0009029">
    <property type="term" value="F:tetraacyldisaccharide 4'-kinase activity"/>
    <property type="evidence" value="ECO:0007669"/>
    <property type="project" value="UniProtKB-UniRule"/>
</dbReference>
<dbReference type="GO" id="GO:0009245">
    <property type="term" value="P:lipid A biosynthetic process"/>
    <property type="evidence" value="ECO:0007669"/>
    <property type="project" value="UniProtKB-UniRule"/>
</dbReference>
<dbReference type="GO" id="GO:0009244">
    <property type="term" value="P:lipopolysaccharide core region biosynthetic process"/>
    <property type="evidence" value="ECO:0007669"/>
    <property type="project" value="TreeGrafter"/>
</dbReference>
<dbReference type="HAMAP" id="MF_00409">
    <property type="entry name" value="LpxK"/>
    <property type="match status" value="1"/>
</dbReference>
<dbReference type="InterPro" id="IPR003758">
    <property type="entry name" value="LpxK"/>
</dbReference>
<dbReference type="NCBIfam" id="NF001892">
    <property type="entry name" value="PRK00652.1-5"/>
    <property type="match status" value="1"/>
</dbReference>
<dbReference type="PANTHER" id="PTHR42724">
    <property type="entry name" value="TETRAACYLDISACCHARIDE 4'-KINASE"/>
    <property type="match status" value="1"/>
</dbReference>
<dbReference type="PANTHER" id="PTHR42724:SF1">
    <property type="entry name" value="TETRAACYLDISACCHARIDE 4'-KINASE, MITOCHONDRIAL-RELATED"/>
    <property type="match status" value="1"/>
</dbReference>
<dbReference type="Pfam" id="PF02606">
    <property type="entry name" value="LpxK"/>
    <property type="match status" value="2"/>
</dbReference>
<comment type="function">
    <text evidence="1">Transfers the gamma-phosphate of ATP to the 4'-position of a tetraacyldisaccharide 1-phosphate intermediate (termed DS-1-P) to form tetraacyldisaccharide 1,4'-bis-phosphate (lipid IVA).</text>
</comment>
<comment type="catalytic activity">
    <reaction evidence="1">
        <text>a lipid A disaccharide + ATP = a lipid IVA + ADP + H(+)</text>
        <dbReference type="Rhea" id="RHEA:67840"/>
        <dbReference type="ChEBI" id="CHEBI:15378"/>
        <dbReference type="ChEBI" id="CHEBI:30616"/>
        <dbReference type="ChEBI" id="CHEBI:176343"/>
        <dbReference type="ChEBI" id="CHEBI:176425"/>
        <dbReference type="ChEBI" id="CHEBI:456216"/>
        <dbReference type="EC" id="2.7.1.130"/>
    </reaction>
</comment>
<comment type="pathway">
    <text evidence="1">Glycolipid biosynthesis; lipid IV(A) biosynthesis; lipid IV(A) from (3R)-3-hydroxytetradecanoyl-[acyl-carrier-protein] and UDP-N-acetyl-alpha-D-glucosamine: step 6/6.</text>
</comment>
<comment type="similarity">
    <text evidence="1">Belongs to the LpxK family.</text>
</comment>
<name>LPXK_CAMJD</name>
<proteinExistence type="inferred from homology"/>
<protein>
    <recommendedName>
        <fullName evidence="1">Tetraacyldisaccharide 4'-kinase</fullName>
        <ecNumber evidence="1">2.7.1.130</ecNumber>
    </recommendedName>
    <alternativeName>
        <fullName evidence="1">Lipid A 4'-kinase</fullName>
    </alternativeName>
</protein>